<name>AETX2_ANEER</name>
<evidence type="ECO:0000269" key="1">
    <source>
    </source>
</evidence>
<evidence type="ECO:0000303" key="2">
    <source>
    </source>
</evidence>
<evidence type="ECO:0000303" key="3">
    <source>
    </source>
</evidence>
<evidence type="ECO:0000305" key="4"/>
<organism>
    <name type="scientific">Anemonia erythraea</name>
    <name type="common">Sea anemone</name>
    <dbReference type="NCBI Taxonomy" id="48400"/>
    <lineage>
        <taxon>Eukaryota</taxon>
        <taxon>Metazoa</taxon>
        <taxon>Cnidaria</taxon>
        <taxon>Anthozoa</taxon>
        <taxon>Hexacorallia</taxon>
        <taxon>Actiniaria</taxon>
        <taxon>Actiniidae</taxon>
        <taxon>Anemonia</taxon>
    </lineage>
</organism>
<keyword id="KW-0903">Direct protein sequencing</keyword>
<keyword id="KW-1015">Disulfide bond</keyword>
<keyword id="KW-0166">Nematocyst</keyword>
<keyword id="KW-0964">Secreted</keyword>
<keyword id="KW-0800">Toxin</keyword>
<reference key="1">
    <citation type="journal article" date="1997" name="Biochim. Biophys. Acta">
        <title>Novel polypeptide toxins with crab lethality from the sea anemone Anemonia erythraea.</title>
        <authorList>
            <person name="Shiomi K."/>
            <person name="Qian W.-H."/>
            <person name="Lin X.-Y."/>
            <person name="Shimakura K."/>
            <person name="Nagashima Y."/>
            <person name="Ishida M."/>
        </authorList>
    </citation>
    <scope>PROTEIN SEQUENCE</scope>
    <scope>MASS SPECTROMETRY</scope>
    <scope>TOXIC DOSE</scope>
    <source>
        <strain>Banda</strain>
        <strain>Moroiso</strain>
        <tissue>Nematoblast</tissue>
    </source>
</reference>
<reference key="2">
    <citation type="journal article" date="2012" name="Toxicon">
        <title>Development of a rational nomenclature for naming peptide and protein toxins from sea anemones.</title>
        <authorList>
            <person name="Oliveira J.S."/>
            <person name="Fuentes-Silva D."/>
            <person name="King G.F."/>
        </authorList>
    </citation>
    <scope>NOMENCLATURE</scope>
</reference>
<sequence>GEIECSSSECCPSGKHLCKGGFVHYCCPNDRYMSCGILGFGTCYCWKADYYEYGSTPTC</sequence>
<accession>P69944</accession>
<protein>
    <recommendedName>
        <fullName evidence="2">U-actitoxin-Aer2a</fullName>
        <shortName evidence="2">U-AITX-Aer2a</shortName>
    </recommendedName>
    <alternativeName>
        <fullName evidence="3">AETX II</fullName>
    </alternativeName>
    <alternativeName>
        <fullName evidence="4">Toxin AETX-2</fullName>
    </alternativeName>
</protein>
<dbReference type="GO" id="GO:0005576">
    <property type="term" value="C:extracellular region"/>
    <property type="evidence" value="ECO:0007669"/>
    <property type="project" value="UniProtKB-SubCell"/>
</dbReference>
<dbReference type="GO" id="GO:0042151">
    <property type="term" value="C:nematocyst"/>
    <property type="evidence" value="ECO:0007669"/>
    <property type="project" value="UniProtKB-SubCell"/>
</dbReference>
<dbReference type="GO" id="GO:0090729">
    <property type="term" value="F:toxin activity"/>
    <property type="evidence" value="ECO:0007669"/>
    <property type="project" value="UniProtKB-KW"/>
</dbReference>
<proteinExistence type="evidence at protein level"/>
<comment type="subcellular location">
    <subcellularLocation>
        <location evidence="4">Secreted</location>
    </subcellularLocation>
    <subcellularLocation>
        <location evidence="4">Nematocyst</location>
    </subcellularLocation>
</comment>
<comment type="PTM">
    <text evidence="4">Contains 5 disulfide bonds.</text>
</comment>
<comment type="mass spectrometry"/>
<comment type="toxic dose">
    <text evidence="1">LD(50) is 0.53 ug/kg to crabs.</text>
</comment>
<feature type="chain" id="PRO_0000221544" description="U-actitoxin-Aer2a" evidence="1">
    <location>
        <begin position="1"/>
        <end position="59"/>
    </location>
</feature>